<proteinExistence type="inferred from homology"/>
<sequence>SLSHEKFFSLGSGPGRALAGREELYKELGYKDSADAAVLVLESDKVPPQEVVEKVARDTGVKAENLTFILTPTRSLAGTVQIVARVLEVALHKIHTLHFPLEHVVDGMASAPLPPPAPDFLIGMGRTNDAILFGGHAHIFVKGSDEAAAKLAKELPSSASRDYGRPFAEVFKAVNM</sequence>
<keyword id="KW-0963">Cytoplasm</keyword>
<keyword id="KW-0378">Hydrolase</keyword>
<keyword id="KW-0554">One-carbon metabolism</keyword>
<comment type="function">
    <text evidence="1">Catalyzes the hydrolysis of methenyl-H(4)MPT(+) to 5-formyl-H(4)MPT.</text>
</comment>
<comment type="catalytic activity">
    <reaction>
        <text>5,10-methenyl-5,6,7,8-tetrahydromethanopterin + H2O = N(5)-formyl-5,6,7,8-tetrahydromethanopterin + H(+)</text>
        <dbReference type="Rhea" id="RHEA:19053"/>
        <dbReference type="ChEBI" id="CHEBI:15377"/>
        <dbReference type="ChEBI" id="CHEBI:15378"/>
        <dbReference type="ChEBI" id="CHEBI:58018"/>
        <dbReference type="ChEBI" id="CHEBI:58337"/>
        <dbReference type="EC" id="3.5.4.27"/>
    </reaction>
</comment>
<comment type="pathway">
    <text>One-carbon metabolism; formaldehyde degradation; formate from formaldehyde (H(4)MPT route): step 3/5.</text>
</comment>
<comment type="subcellular location">
    <subcellularLocation>
        <location evidence="1">Cytoplasm</location>
    </subcellularLocation>
</comment>
<comment type="similarity">
    <text evidence="2">Belongs to the MCH family.</text>
</comment>
<accession>Q9RPW5</accession>
<dbReference type="EC" id="3.5.4.27"/>
<dbReference type="EMBL" id="AF142652">
    <property type="protein sequence ID" value="AAD55902.1"/>
    <property type="molecule type" value="Genomic_DNA"/>
</dbReference>
<dbReference type="SMR" id="Q9RPW5"/>
<dbReference type="UniPathway" id="UPA00562">
    <property type="reaction ID" value="UER00703"/>
</dbReference>
<dbReference type="GO" id="GO:0005737">
    <property type="term" value="C:cytoplasm"/>
    <property type="evidence" value="ECO:0007669"/>
    <property type="project" value="UniProtKB-SubCell"/>
</dbReference>
<dbReference type="GO" id="GO:0018759">
    <property type="term" value="F:methenyltetrahydromethanopterin cyclohydrolase activity"/>
    <property type="evidence" value="ECO:0007669"/>
    <property type="project" value="UniProtKB-EC"/>
</dbReference>
<dbReference type="GO" id="GO:0046294">
    <property type="term" value="P:formaldehyde catabolic process"/>
    <property type="evidence" value="ECO:0007669"/>
    <property type="project" value="UniProtKB-UniPathway"/>
</dbReference>
<dbReference type="GO" id="GO:0006730">
    <property type="term" value="P:one-carbon metabolic process"/>
    <property type="evidence" value="ECO:0007669"/>
    <property type="project" value="UniProtKB-KW"/>
</dbReference>
<dbReference type="Gene3D" id="3.30.1030.10">
    <property type="entry name" value="Methenyltetrahydromethanopterin Cyclohydrolase, Chain A, domain 2"/>
    <property type="match status" value="1"/>
</dbReference>
<dbReference type="InterPro" id="IPR003209">
    <property type="entry name" value="METHMP_CycHdrlase"/>
</dbReference>
<dbReference type="NCBIfam" id="TIGR03120">
    <property type="entry name" value="one_C_mch"/>
    <property type="match status" value="1"/>
</dbReference>
<dbReference type="Pfam" id="PF02289">
    <property type="entry name" value="MCH"/>
    <property type="match status" value="1"/>
</dbReference>
<dbReference type="SUPFAM" id="SSF56199">
    <property type="entry name" value="Methenyltetrahydromethanopterin cyclohydrolase"/>
    <property type="match status" value="1"/>
</dbReference>
<feature type="chain" id="PRO_0000140891" description="Methenyltetrahydromethanopterin cyclohydrolase">
    <location>
        <begin position="1" status="less than"/>
        <end position="176" status="greater than"/>
    </location>
</feature>
<feature type="non-terminal residue">
    <location>
        <position position="1"/>
    </location>
</feature>
<feature type="non-terminal residue">
    <location>
        <position position="176"/>
    </location>
</feature>
<name>MCH_METME</name>
<reference key="1">
    <citation type="journal article" date="1999" name="J. Bacteriol.">
        <title>Distribution of tetrahydromethanopterin-dependent enzymes in methylotrophic bacteria and phylogeny of methenyl tetrahydromethanopterin cyclohydrolases.</title>
        <authorList>
            <person name="Vorholt J.A."/>
            <person name="Chistoserdova L.V."/>
            <person name="Stolyar S.M."/>
            <person name="Thauer R.K."/>
            <person name="Lidstrom M.E."/>
        </authorList>
    </citation>
    <scope>NUCLEOTIDE SEQUENCE [GENOMIC DNA]</scope>
    <source>
        <strain>ATCC 53528 / DSM 5691 / CCUG 58724 / LMG 6787 / NCIMB 10515 / AS1</strain>
    </source>
</reference>
<gene>
    <name type="primary">mch</name>
</gene>
<organism>
    <name type="scientific">Methylophilus methylotrophus</name>
    <name type="common">Bacterium W3A1</name>
    <dbReference type="NCBI Taxonomy" id="17"/>
    <lineage>
        <taxon>Bacteria</taxon>
        <taxon>Pseudomonadati</taxon>
        <taxon>Pseudomonadota</taxon>
        <taxon>Betaproteobacteria</taxon>
        <taxon>Nitrosomonadales</taxon>
        <taxon>Methylophilaceae</taxon>
        <taxon>Methylophilus</taxon>
    </lineage>
</organism>
<evidence type="ECO:0000250" key="1"/>
<evidence type="ECO:0000305" key="2"/>
<protein>
    <recommendedName>
        <fullName>Methenyltetrahydromethanopterin cyclohydrolase</fullName>
        <ecNumber>3.5.4.27</ecNumber>
    </recommendedName>
    <alternativeName>
        <fullName>Methenyl-H4MPT cyclohydrolase</fullName>
    </alternativeName>
</protein>